<reference key="1">
    <citation type="journal article" date="2002" name="Gene">
        <title>Human ortholog to mouse gene imap38 encoding an ER-localizable G-protein belongs to a gene family clustered on chromosome 7q32-36.</title>
        <authorList>
            <person name="Stamm O."/>
            <person name="Kruecken J."/>
            <person name="Schmitt-Wrede H.-P."/>
            <person name="Benten W.P.M."/>
            <person name="Wunderlich F."/>
        </authorList>
    </citation>
    <scope>NUCLEOTIDE SEQUENCE [MRNA]</scope>
    <scope>SUBCELLULAR LOCATION</scope>
    <scope>TISSUE SPECIFICITY</scope>
    <source>
        <tissue>Spleen</tissue>
    </source>
</reference>
<reference key="2">
    <citation type="journal article" date="2004" name="Nat. Genet.">
        <title>Complete sequencing and characterization of 21,243 full-length human cDNAs.</title>
        <authorList>
            <person name="Ota T."/>
            <person name="Suzuki Y."/>
            <person name="Nishikawa T."/>
            <person name="Otsuki T."/>
            <person name="Sugiyama T."/>
            <person name="Irie R."/>
            <person name="Wakamatsu A."/>
            <person name="Hayashi K."/>
            <person name="Sato H."/>
            <person name="Nagai K."/>
            <person name="Kimura K."/>
            <person name="Makita H."/>
            <person name="Sekine M."/>
            <person name="Obayashi M."/>
            <person name="Nishi T."/>
            <person name="Shibahara T."/>
            <person name="Tanaka T."/>
            <person name="Ishii S."/>
            <person name="Yamamoto J."/>
            <person name="Saito K."/>
            <person name="Kawai Y."/>
            <person name="Isono Y."/>
            <person name="Nakamura Y."/>
            <person name="Nagahari K."/>
            <person name="Murakami K."/>
            <person name="Yasuda T."/>
            <person name="Iwayanagi T."/>
            <person name="Wagatsuma M."/>
            <person name="Shiratori A."/>
            <person name="Sudo H."/>
            <person name="Hosoiri T."/>
            <person name="Kaku Y."/>
            <person name="Kodaira H."/>
            <person name="Kondo H."/>
            <person name="Sugawara M."/>
            <person name="Takahashi M."/>
            <person name="Kanda K."/>
            <person name="Yokoi T."/>
            <person name="Furuya T."/>
            <person name="Kikkawa E."/>
            <person name="Omura Y."/>
            <person name="Abe K."/>
            <person name="Kamihara K."/>
            <person name="Katsuta N."/>
            <person name="Sato K."/>
            <person name="Tanikawa M."/>
            <person name="Yamazaki M."/>
            <person name="Ninomiya K."/>
            <person name="Ishibashi T."/>
            <person name="Yamashita H."/>
            <person name="Murakawa K."/>
            <person name="Fujimori K."/>
            <person name="Tanai H."/>
            <person name="Kimata M."/>
            <person name="Watanabe M."/>
            <person name="Hiraoka S."/>
            <person name="Chiba Y."/>
            <person name="Ishida S."/>
            <person name="Ono Y."/>
            <person name="Takiguchi S."/>
            <person name="Watanabe S."/>
            <person name="Yosida M."/>
            <person name="Hotuta T."/>
            <person name="Kusano J."/>
            <person name="Kanehori K."/>
            <person name="Takahashi-Fujii A."/>
            <person name="Hara H."/>
            <person name="Tanase T.-O."/>
            <person name="Nomura Y."/>
            <person name="Togiya S."/>
            <person name="Komai F."/>
            <person name="Hara R."/>
            <person name="Takeuchi K."/>
            <person name="Arita M."/>
            <person name="Imose N."/>
            <person name="Musashino K."/>
            <person name="Yuuki H."/>
            <person name="Oshima A."/>
            <person name="Sasaki N."/>
            <person name="Aotsuka S."/>
            <person name="Yoshikawa Y."/>
            <person name="Matsunawa H."/>
            <person name="Ichihara T."/>
            <person name="Shiohata N."/>
            <person name="Sano S."/>
            <person name="Moriya S."/>
            <person name="Momiyama H."/>
            <person name="Satoh N."/>
            <person name="Takami S."/>
            <person name="Terashima Y."/>
            <person name="Suzuki O."/>
            <person name="Nakagawa S."/>
            <person name="Senoh A."/>
            <person name="Mizoguchi H."/>
            <person name="Goto Y."/>
            <person name="Shimizu F."/>
            <person name="Wakebe H."/>
            <person name="Hishigaki H."/>
            <person name="Watanabe T."/>
            <person name="Sugiyama A."/>
            <person name="Takemoto M."/>
            <person name="Kawakami B."/>
            <person name="Yamazaki M."/>
            <person name="Watanabe K."/>
            <person name="Kumagai A."/>
            <person name="Itakura S."/>
            <person name="Fukuzumi Y."/>
            <person name="Fujimori Y."/>
            <person name="Komiyama M."/>
            <person name="Tashiro H."/>
            <person name="Tanigami A."/>
            <person name="Fujiwara T."/>
            <person name="Ono T."/>
            <person name="Yamada K."/>
            <person name="Fujii Y."/>
            <person name="Ozaki K."/>
            <person name="Hirao M."/>
            <person name="Ohmori Y."/>
            <person name="Kawabata A."/>
            <person name="Hikiji T."/>
            <person name="Kobatake N."/>
            <person name="Inagaki H."/>
            <person name="Ikema Y."/>
            <person name="Okamoto S."/>
            <person name="Okitani R."/>
            <person name="Kawakami T."/>
            <person name="Noguchi S."/>
            <person name="Itoh T."/>
            <person name="Shigeta K."/>
            <person name="Senba T."/>
            <person name="Matsumura K."/>
            <person name="Nakajima Y."/>
            <person name="Mizuno T."/>
            <person name="Morinaga M."/>
            <person name="Sasaki M."/>
            <person name="Togashi T."/>
            <person name="Oyama M."/>
            <person name="Hata H."/>
            <person name="Watanabe M."/>
            <person name="Komatsu T."/>
            <person name="Mizushima-Sugano J."/>
            <person name="Satoh T."/>
            <person name="Shirai Y."/>
            <person name="Takahashi Y."/>
            <person name="Nakagawa K."/>
            <person name="Okumura K."/>
            <person name="Nagase T."/>
            <person name="Nomura N."/>
            <person name="Kikuchi H."/>
            <person name="Masuho Y."/>
            <person name="Yamashita R."/>
            <person name="Nakai K."/>
            <person name="Yada T."/>
            <person name="Nakamura Y."/>
            <person name="Ohara O."/>
            <person name="Isogai T."/>
            <person name="Sugano S."/>
        </authorList>
    </citation>
    <scope>NUCLEOTIDE SEQUENCE [LARGE SCALE MRNA]</scope>
    <source>
        <tissue>Lung</tissue>
        <tissue>Thalamus</tissue>
    </source>
</reference>
<reference key="3">
    <citation type="submission" date="2005-09" db="EMBL/GenBank/DDBJ databases">
        <authorList>
            <person name="Mural R.J."/>
            <person name="Istrail S."/>
            <person name="Sutton G.G."/>
            <person name="Florea L."/>
            <person name="Halpern A.L."/>
            <person name="Mobarry C.M."/>
            <person name="Lippert R."/>
            <person name="Walenz B."/>
            <person name="Shatkay H."/>
            <person name="Dew I."/>
            <person name="Miller J.R."/>
            <person name="Flanigan M.J."/>
            <person name="Edwards N.J."/>
            <person name="Bolanos R."/>
            <person name="Fasulo D."/>
            <person name="Halldorsson B.V."/>
            <person name="Hannenhalli S."/>
            <person name="Turner R."/>
            <person name="Yooseph S."/>
            <person name="Lu F."/>
            <person name="Nusskern D.R."/>
            <person name="Shue B.C."/>
            <person name="Zheng X.H."/>
            <person name="Zhong F."/>
            <person name="Delcher A.L."/>
            <person name="Huson D.H."/>
            <person name="Kravitz S.A."/>
            <person name="Mouchard L."/>
            <person name="Reinert K."/>
            <person name="Remington K.A."/>
            <person name="Clark A.G."/>
            <person name="Waterman M.S."/>
            <person name="Eichler E.E."/>
            <person name="Adams M.D."/>
            <person name="Hunkapiller M.W."/>
            <person name="Myers E.W."/>
            <person name="Venter J.C."/>
        </authorList>
    </citation>
    <scope>NUCLEOTIDE SEQUENCE [LARGE SCALE GENOMIC DNA]</scope>
</reference>
<reference key="4">
    <citation type="journal article" date="2004" name="Genome Res.">
        <title>The status, quality, and expansion of the NIH full-length cDNA project: the Mammalian Gene Collection (MGC).</title>
        <authorList>
            <consortium name="The MGC Project Team"/>
        </authorList>
    </citation>
    <scope>NUCLEOTIDE SEQUENCE [LARGE SCALE MRNA]</scope>
    <source>
        <tissue>Blood</tissue>
    </source>
</reference>
<reference key="5">
    <citation type="journal article" date="2013" name="Structure">
        <title>Structural insights into the mechanism of GTPase activation in the GIMAP family.</title>
        <authorList>
            <person name="Schwefel D."/>
            <person name="Arasu B.S."/>
            <person name="Marino S.F."/>
            <person name="Lamprecht B."/>
            <person name="Kochert K."/>
            <person name="Rosenbaum E."/>
            <person name="Eichhorst J."/>
            <person name="Wiesner B."/>
            <person name="Behlke J."/>
            <person name="Rocks O."/>
            <person name="Mathas S."/>
            <person name="Daumke O."/>
        </authorList>
    </citation>
    <scope>TISSUE SPECIFICITY</scope>
</reference>
<reference key="6">
    <citation type="journal article" date="2015" name="Proteomics">
        <title>N-terminome analysis of the human mitochondrial proteome.</title>
        <authorList>
            <person name="Vaca Jacome A.S."/>
            <person name="Rabilloud T."/>
            <person name="Schaeffer-Reiss C."/>
            <person name="Rompais M."/>
            <person name="Ayoub D."/>
            <person name="Lane L."/>
            <person name="Bairoch A."/>
            <person name="Van Dorsselaer A."/>
            <person name="Carapito C."/>
        </authorList>
    </citation>
    <scope>IDENTIFICATION BY MASS SPECTROMETRY [LARGE SCALE ANALYSIS]</scope>
</reference>
<reference key="7">
    <citation type="submission" date="2010-03" db="PDB data bank">
        <title>Crystal structure of human GTPase IMAP family member 1.</title>
        <authorList>
            <consortium name="Structural genomics consortium (SGC)"/>
        </authorList>
    </citation>
    <scope>X-RAY CRYSTALLOGRAPHY (2.21 ANGSTROMS) OF 25-253 IN COMPLEX WITH GDP</scope>
</reference>
<reference key="8">
    <citation type="journal article" date="2006" name="Science">
        <title>The consensus coding sequences of human breast and colorectal cancers.</title>
        <authorList>
            <person name="Sjoeblom T."/>
            <person name="Jones S."/>
            <person name="Wood L.D."/>
            <person name="Parsons D.W."/>
            <person name="Lin J."/>
            <person name="Barber T.D."/>
            <person name="Mandelker D."/>
            <person name="Leary R.J."/>
            <person name="Ptak J."/>
            <person name="Silliman N."/>
            <person name="Szabo S."/>
            <person name="Buckhaults P."/>
            <person name="Farrell C."/>
            <person name="Meeh P."/>
            <person name="Markowitz S.D."/>
            <person name="Willis J."/>
            <person name="Dawson D."/>
            <person name="Willson J.K.V."/>
            <person name="Gazdar A.F."/>
            <person name="Hartigan J."/>
            <person name="Wu L."/>
            <person name="Liu C."/>
            <person name="Parmigiani G."/>
            <person name="Park B.H."/>
            <person name="Bachman K.E."/>
            <person name="Papadopoulos N."/>
            <person name="Vogelstein B."/>
            <person name="Kinzler K.W."/>
            <person name="Velculescu V.E."/>
        </authorList>
    </citation>
    <scope>VARIANT [LARGE SCALE ANALYSIS] GLU-166</scope>
</reference>
<accession>Q8WWP7</accession>
<accession>B2RCI3</accession>
<accession>Q8NAZ0</accession>
<sequence length="306" mass="34369">MGGRKMATDEENVYGLEENAQSRQESTRRLILVGRTGAGKSATGNSILGQRRFFSRLGATSVTRACTTGSRRWDKCHVEVVDTPDIFSSQVSKTDPGCEERGHCYLLSAPGPHALLLVTQLGRFTAQDQQAVRQVRDMFGEDVLKWMVIVFTRKEDLAGGSLHDYVSNTENRALRELVAECGGRVCAFDNRATGREQEAQVEQLLGMVEGLVLEHKGAHYSNEVYELAQVLRWAGPEERLRRVAERVAARVQRRPWGAWLSARLWKWLKSPRSWRLGLALLLGGALLFWVLLHRRWSEAVAEVGPD</sequence>
<keyword id="KW-0002">3D-structure</keyword>
<keyword id="KW-0256">Endoplasmic reticulum</keyword>
<keyword id="KW-0333">Golgi apparatus</keyword>
<keyword id="KW-0342">GTP-binding</keyword>
<keyword id="KW-0472">Membrane</keyword>
<keyword id="KW-0547">Nucleotide-binding</keyword>
<keyword id="KW-1267">Proteomics identification</keyword>
<keyword id="KW-1185">Reference proteome</keyword>
<keyword id="KW-0812">Transmembrane</keyword>
<keyword id="KW-1133">Transmembrane helix</keyword>
<protein>
    <recommendedName>
        <fullName>GTPase IMAP family member 1</fullName>
    </recommendedName>
    <alternativeName>
        <fullName>Immunity-associated protein 1</fullName>
        <shortName>hIMAP1</shortName>
    </alternativeName>
</protein>
<name>GIMA1_HUMAN</name>
<feature type="chain" id="PRO_0000190984" description="GTPase IMAP family member 1">
    <location>
        <begin position="1"/>
        <end position="306"/>
    </location>
</feature>
<feature type="topological domain" description="Cytoplasmic" evidence="4">
    <location>
        <begin position="1"/>
        <end position="272"/>
    </location>
</feature>
<feature type="transmembrane region" description="Helical; Anchor for type IV membrane protein" evidence="4">
    <location>
        <begin position="273"/>
        <end position="292"/>
    </location>
</feature>
<feature type="topological domain" description="Lumenal" evidence="4">
    <location>
        <begin position="293"/>
        <end position="306"/>
    </location>
</feature>
<feature type="domain" description="AIG1-type G" evidence="5">
    <location>
        <begin position="25"/>
        <end position="229"/>
    </location>
</feature>
<feature type="region of interest" description="Disordered" evidence="6">
    <location>
        <begin position="1"/>
        <end position="21"/>
    </location>
</feature>
<feature type="region of interest" description="G1" evidence="5">
    <location>
        <begin position="34"/>
        <end position="41"/>
    </location>
</feature>
<feature type="region of interest" description="G2" evidence="5">
    <location>
        <begin position="61"/>
        <end position="65"/>
    </location>
</feature>
<feature type="region of interest" description="G3" evidence="5">
    <location>
        <begin position="82"/>
        <end position="85"/>
    </location>
</feature>
<feature type="region of interest" description="G4" evidence="5">
    <location>
        <begin position="152"/>
        <end position="155"/>
    </location>
</feature>
<feature type="region of interest" description="G5" evidence="5">
    <location>
        <begin position="189"/>
        <end position="191"/>
    </location>
</feature>
<feature type="binding site" evidence="10 12">
    <location>
        <begin position="34"/>
        <end position="42"/>
    </location>
    <ligand>
        <name>GTP</name>
        <dbReference type="ChEBI" id="CHEBI:37565"/>
    </ligand>
</feature>
<feature type="binding site" evidence="3">
    <location>
        <position position="55"/>
    </location>
    <ligand>
        <name>GTP</name>
        <dbReference type="ChEBI" id="CHEBI:37565"/>
    </ligand>
</feature>
<feature type="binding site" evidence="10 12">
    <location>
        <begin position="153"/>
        <end position="155"/>
    </location>
    <ligand>
        <name>GTP</name>
        <dbReference type="ChEBI" id="CHEBI:37565"/>
    </ligand>
</feature>
<feature type="binding site" evidence="10 12">
    <location>
        <position position="190"/>
    </location>
    <ligand>
        <name>GTP</name>
        <dbReference type="ChEBI" id="CHEBI:37565"/>
    </ligand>
</feature>
<feature type="sequence variant" id="VAR_036301" description="In a breast cancer sample; somatic mutation." evidence="8">
    <original>V</original>
    <variation>E</variation>
    <location>
        <position position="166"/>
    </location>
</feature>
<feature type="sequence variant" id="VAR_049530" description="In dbSNP:rs7811263.">
    <original>R</original>
    <variation>S</variation>
    <location>
        <position position="254"/>
    </location>
</feature>
<feature type="sequence conflict" description="In Ref. 2; BAC03754." evidence="11" ref="2">
    <original>G</original>
    <variation>V</variation>
    <location>
        <position position="235"/>
    </location>
</feature>
<feature type="strand" evidence="13">
    <location>
        <begin position="27"/>
        <end position="34"/>
    </location>
</feature>
<feature type="helix" evidence="13">
    <location>
        <begin position="40"/>
        <end position="48"/>
    </location>
</feature>
<feature type="strand" evidence="13">
    <location>
        <begin position="67"/>
        <end position="73"/>
    </location>
</feature>
<feature type="strand" evidence="13">
    <location>
        <begin position="76"/>
        <end position="82"/>
    </location>
</feature>
<feature type="helix" evidence="13">
    <location>
        <begin position="91"/>
        <end position="94"/>
    </location>
</feature>
<feature type="helix" evidence="13">
    <location>
        <begin position="99"/>
        <end position="108"/>
    </location>
</feature>
<feature type="strand" evidence="13">
    <location>
        <begin position="113"/>
        <end position="120"/>
    </location>
</feature>
<feature type="helix" evidence="13">
    <location>
        <begin position="126"/>
        <end position="139"/>
    </location>
</feature>
<feature type="helix" evidence="13">
    <location>
        <begin position="141"/>
        <end position="146"/>
    </location>
</feature>
<feature type="strand" evidence="13">
    <location>
        <begin position="147"/>
        <end position="152"/>
    </location>
</feature>
<feature type="helix" evidence="13">
    <location>
        <begin position="154"/>
        <end position="157"/>
    </location>
</feature>
<feature type="helix" evidence="13">
    <location>
        <begin position="162"/>
        <end position="168"/>
    </location>
</feature>
<feature type="helix" evidence="13">
    <location>
        <begin position="172"/>
        <end position="180"/>
    </location>
</feature>
<feature type="turn" evidence="13">
    <location>
        <begin position="181"/>
        <end position="183"/>
    </location>
</feature>
<feature type="strand" evidence="13">
    <location>
        <begin position="185"/>
        <end position="187"/>
    </location>
</feature>
<feature type="helix" evidence="13">
    <location>
        <begin position="194"/>
        <end position="214"/>
    </location>
</feature>
<feature type="turn" evidence="13">
    <location>
        <begin position="215"/>
        <end position="217"/>
    </location>
</feature>
<feature type="helix" evidence="13">
    <location>
        <begin position="223"/>
        <end position="230"/>
    </location>
</feature>
<feature type="helix" evidence="13">
    <location>
        <begin position="231"/>
        <end position="233"/>
    </location>
</feature>
<feature type="helix" evidence="13">
    <location>
        <begin position="236"/>
        <end position="250"/>
    </location>
</feature>
<gene>
    <name type="primary">GIMAP1</name>
    <name type="synonym">IMAP1</name>
</gene>
<evidence type="ECO:0000250" key="1"/>
<evidence type="ECO:0000250" key="2">
    <source>
        <dbReference type="UniProtKB" id="P70224"/>
    </source>
</evidence>
<evidence type="ECO:0000250" key="3">
    <source>
        <dbReference type="UniProtKB" id="Q9UG22"/>
    </source>
</evidence>
<evidence type="ECO:0000255" key="4"/>
<evidence type="ECO:0000255" key="5">
    <source>
        <dbReference type="PROSITE-ProRule" id="PRU01057"/>
    </source>
</evidence>
<evidence type="ECO:0000256" key="6">
    <source>
        <dbReference type="SAM" id="MobiDB-lite"/>
    </source>
</evidence>
<evidence type="ECO:0000269" key="7">
    <source>
    </source>
</evidence>
<evidence type="ECO:0000269" key="8">
    <source>
    </source>
</evidence>
<evidence type="ECO:0000269" key="9">
    <source>
    </source>
</evidence>
<evidence type="ECO:0000269" key="10">
    <source ref="7"/>
</evidence>
<evidence type="ECO:0000305" key="11"/>
<evidence type="ECO:0007744" key="12">
    <source>
        <dbReference type="PDB" id="3V70"/>
    </source>
</evidence>
<evidence type="ECO:0007829" key="13">
    <source>
        <dbReference type="PDB" id="3V70"/>
    </source>
</evidence>
<organism>
    <name type="scientific">Homo sapiens</name>
    <name type="common">Human</name>
    <dbReference type="NCBI Taxonomy" id="9606"/>
    <lineage>
        <taxon>Eukaryota</taxon>
        <taxon>Metazoa</taxon>
        <taxon>Chordata</taxon>
        <taxon>Craniata</taxon>
        <taxon>Vertebrata</taxon>
        <taxon>Euteleostomi</taxon>
        <taxon>Mammalia</taxon>
        <taxon>Eutheria</taxon>
        <taxon>Euarchontoglires</taxon>
        <taxon>Primates</taxon>
        <taxon>Haplorrhini</taxon>
        <taxon>Catarrhini</taxon>
        <taxon>Hominidae</taxon>
        <taxon>Homo</taxon>
    </lineage>
</organism>
<comment type="function">
    <text evidence="1">May regulate lymphocyte survival. Required for normal levels of mature T-lymphocytes and mature B-cells (By similarity).</text>
</comment>
<comment type="interaction">
    <interactant intactId="EBI-11991950">
        <id>Q8WWP7</id>
    </interactant>
    <interactant intactId="EBI-13059134">
        <id>Q13520</id>
        <label>AQP6</label>
    </interactant>
    <organismsDiffer>false</organismsDiffer>
    <experiments>3</experiments>
</comment>
<comment type="interaction">
    <interactant intactId="EBI-11991950">
        <id>Q8WWP7</id>
    </interactant>
    <interactant intactId="EBI-11343438">
        <id>Q3SXY8</id>
        <label>ARL13B</label>
    </interactant>
    <organismsDiffer>false</organismsDiffer>
    <experiments>3</experiments>
</comment>
<comment type="interaction">
    <interactant intactId="EBI-11991950">
        <id>Q8WWP7</id>
    </interactant>
    <interactant intactId="EBI-700794">
        <id>Q13323</id>
        <label>BIK</label>
    </interactant>
    <organismsDiffer>false</organismsDiffer>
    <experiments>3</experiments>
</comment>
<comment type="interaction">
    <interactant intactId="EBI-11991950">
        <id>Q8WWP7</id>
    </interactant>
    <interactant intactId="EBI-3895726">
        <id>P62952</id>
        <label>BLCAP</label>
    </interactant>
    <organismsDiffer>false</organismsDiffer>
    <experiments>3</experiments>
</comment>
<comment type="interaction">
    <interactant intactId="EBI-11991950">
        <id>Q8WWP7</id>
    </interactant>
    <interactant intactId="EBI-7797864">
        <id>P11912</id>
        <label>CD79A</label>
    </interactant>
    <organismsDiffer>false</organismsDiffer>
    <experiments>3</experiments>
</comment>
<comment type="interaction">
    <interactant intactId="EBI-11991950">
        <id>Q8WWP7</id>
    </interactant>
    <interactant intactId="EBI-2873246">
        <id>Q8IUN9</id>
        <label>CLEC10A</label>
    </interactant>
    <organismsDiffer>false</organismsDiffer>
    <experiments>4</experiments>
</comment>
<comment type="interaction">
    <interactant intactId="EBI-11991950">
        <id>Q8WWP7</id>
    </interactant>
    <interactant intactId="EBI-18013275">
        <id>Q7Z7G2</id>
        <label>CPLX4</label>
    </interactant>
    <organismsDiffer>false</organismsDiffer>
    <experiments>3</experiments>
</comment>
<comment type="interaction">
    <interactant intactId="EBI-11991950">
        <id>Q8WWP7</id>
    </interactant>
    <interactant intactId="EBI-6942903">
        <id>Q96BA8</id>
        <label>CREB3L1</label>
    </interactant>
    <organismsDiffer>false</organismsDiffer>
    <experiments>3</experiments>
</comment>
<comment type="interaction">
    <interactant intactId="EBI-11991950">
        <id>Q8WWP7</id>
    </interactant>
    <interactant intactId="EBI-3915253">
        <id>Q15125</id>
        <label>EBP</label>
    </interactant>
    <organismsDiffer>false</organismsDiffer>
    <experiments>3</experiments>
</comment>
<comment type="interaction">
    <interactant intactId="EBI-11991950">
        <id>Q8WWP7</id>
    </interactant>
    <interactant intactId="EBI-18535450">
        <id>Q9GZR5</id>
        <label>ELOVL4</label>
    </interactant>
    <organismsDiffer>false</organismsDiffer>
    <experiments>3</experiments>
</comment>
<comment type="interaction">
    <interactant intactId="EBI-11991950">
        <id>Q8WWP7</id>
    </interactant>
    <interactant intactId="EBI-781551">
        <id>Q9Y282</id>
        <label>ERGIC3</label>
    </interactant>
    <organismsDiffer>false</organismsDiffer>
    <experiments>3</experiments>
</comment>
<comment type="interaction">
    <interactant intactId="EBI-11991950">
        <id>Q8WWP7</id>
    </interactant>
    <interactant intactId="EBI-17973325">
        <id>P60508</id>
        <label>ERVFRD-1</label>
    </interactant>
    <organismsDiffer>false</organismsDiffer>
    <experiments>3</experiments>
</comment>
<comment type="interaction">
    <interactant intactId="EBI-11991950">
        <id>Q8WWP7</id>
    </interactant>
    <interactant intactId="EBI-18636064">
        <id>Q8TBP5</id>
        <label>FAM174A</label>
    </interactant>
    <organismsDiffer>false</organismsDiffer>
    <experiments>3</experiments>
</comment>
<comment type="interaction">
    <interactant intactId="EBI-11991950">
        <id>Q8WWP7</id>
    </interactant>
    <interactant intactId="EBI-18304435">
        <id>Q5JX71</id>
        <label>FAM209A</label>
    </interactant>
    <organismsDiffer>false</organismsDiffer>
    <experiments>3</experiments>
</comment>
<comment type="interaction">
    <interactant intactId="EBI-11991950">
        <id>Q8WWP7</id>
    </interactant>
    <interactant intactId="EBI-17187481">
        <id>P12318-2</id>
        <label>FCGR2A</label>
    </interactant>
    <organismsDiffer>false</organismsDiffer>
    <experiments>3</experiments>
</comment>
<comment type="interaction">
    <interactant intactId="EBI-11991950">
        <id>Q8WWP7</id>
    </interactant>
    <interactant intactId="EBI-17458373">
        <id>P48165</id>
        <label>GJA8</label>
    </interactant>
    <organismsDiffer>false</organismsDiffer>
    <experiments>3</experiments>
</comment>
<comment type="interaction">
    <interactant intactId="EBI-11991950">
        <id>Q8WWP7</id>
    </interactant>
    <interactant intactId="EBI-1052304">
        <id>Q8NBQ5</id>
        <label>HSD17B11</label>
    </interactant>
    <organismsDiffer>false</organismsDiffer>
    <experiments>3</experiments>
</comment>
<comment type="interaction">
    <interactant intactId="EBI-11991950">
        <id>Q8WWP7</id>
    </interactant>
    <interactant intactId="EBI-1757512">
        <id>P26951</id>
        <label>IL3RA</label>
    </interactant>
    <organismsDiffer>false</organismsDiffer>
    <experiments>3</experiments>
</comment>
<comment type="interaction">
    <interactant intactId="EBI-11991950">
        <id>Q8WWP7</id>
    </interactant>
    <interactant intactId="EBI-10266796">
        <id>Q8N5M9</id>
        <label>JAGN1</label>
    </interactant>
    <organismsDiffer>false</organismsDiffer>
    <experiments>3</experiments>
</comment>
<comment type="interaction">
    <interactant intactId="EBI-11991950">
        <id>Q8WWP7</id>
    </interactant>
    <interactant intactId="EBI-21591415">
        <id>P13473-2</id>
        <label>LAMP2</label>
    </interactant>
    <organismsDiffer>false</organismsDiffer>
    <experiments>3</experiments>
</comment>
<comment type="interaction">
    <interactant intactId="EBI-11991950">
        <id>Q8WWP7</id>
    </interactant>
    <interactant intactId="EBI-373355">
        <id>Q5SR56</id>
        <label>MFSD14B</label>
    </interactant>
    <organismsDiffer>false</organismsDiffer>
    <experiments>3</experiments>
</comment>
<comment type="interaction">
    <interactant intactId="EBI-11991950">
        <id>Q8WWP7</id>
    </interactant>
    <interactant intactId="EBI-724754">
        <id>O14880</id>
        <label>MGST3</label>
    </interactant>
    <organismsDiffer>false</organismsDiffer>
    <experiments>3</experiments>
</comment>
<comment type="interaction">
    <interactant intactId="EBI-11991950">
        <id>Q8WWP7</id>
    </interactant>
    <interactant intactId="EBI-11161398">
        <id>O14684</id>
        <label>PTGES</label>
    </interactant>
    <organismsDiffer>false</organismsDiffer>
    <experiments>3</experiments>
</comment>
<comment type="interaction">
    <interactant intactId="EBI-11991950">
        <id>Q8WWP7</id>
    </interactant>
    <interactant intactId="EBI-7545592">
        <id>Q9H6H4</id>
        <label>REEP4</label>
    </interactant>
    <organismsDiffer>false</organismsDiffer>
    <experiments>3</experiments>
</comment>
<comment type="interaction">
    <interactant intactId="EBI-11991950">
        <id>Q8WWP7</id>
    </interactant>
    <interactant intactId="EBI-1056589">
        <id>Q96TC7</id>
        <label>RMDN3</label>
    </interactant>
    <organismsDiffer>false</organismsDiffer>
    <experiments>3</experiments>
</comment>
<comment type="interaction">
    <interactant intactId="EBI-11991950">
        <id>Q8WWP7</id>
    </interactant>
    <interactant intactId="EBI-3920694">
        <id>Q9NR31</id>
        <label>SAR1A</label>
    </interactant>
    <organismsDiffer>false</organismsDiffer>
    <experiments>3</experiments>
</comment>
<comment type="interaction">
    <interactant intactId="EBI-11991950">
        <id>Q8WWP7</id>
    </interactant>
    <interactant intactId="EBI-17247926">
        <id>Q9NY72</id>
        <label>SCN3B</label>
    </interactant>
    <organismsDiffer>false</organismsDiffer>
    <experiments>3</experiments>
</comment>
<comment type="interaction">
    <interactant intactId="EBI-11991950">
        <id>Q8WWP7</id>
    </interactant>
    <interactant intactId="EBI-2623095">
        <id>Q9Y371</id>
        <label>SH3GLB1</label>
    </interactant>
    <organismsDiffer>false</organismsDiffer>
    <experiments>3</experiments>
</comment>
<comment type="interaction">
    <interactant intactId="EBI-11991950">
        <id>Q8WWP7</id>
    </interactant>
    <interactant intactId="EBI-18159983">
        <id>Q3KNW5</id>
        <label>SLC10A6</label>
    </interactant>
    <organismsDiffer>false</organismsDiffer>
    <experiments>3</experiments>
</comment>
<comment type="interaction">
    <interactant intactId="EBI-11991950">
        <id>Q8WWP7</id>
    </interactant>
    <interactant intactId="EBI-19141793">
        <id>Q13336-2</id>
        <label>SLC14A1</label>
    </interactant>
    <organismsDiffer>false</organismsDiffer>
    <experiments>3</experiments>
</comment>
<comment type="interaction">
    <interactant intactId="EBI-11991950">
        <id>Q8WWP7</id>
    </interactant>
    <interactant intactId="EBI-17595455">
        <id>P54219-3</id>
        <label>SLC18A1</label>
    </interactant>
    <organismsDiffer>false</organismsDiffer>
    <experiments>3</experiments>
</comment>
<comment type="interaction">
    <interactant intactId="EBI-11991950">
        <id>Q8WWP7</id>
    </interactant>
    <interactant intactId="EBI-1211440">
        <id>P27105</id>
        <label>STOM</label>
    </interactant>
    <organismsDiffer>false</organismsDiffer>
    <experiments>3</experiments>
</comment>
<comment type="interaction">
    <interactant intactId="EBI-11991950">
        <id>Q8WWP7</id>
    </interactant>
    <interactant intactId="EBI-712466">
        <id>Q16623</id>
        <label>STX1A</label>
    </interactant>
    <organismsDiffer>false</organismsDiffer>
    <experiments>3</experiments>
</comment>
<comment type="interaction">
    <interactant intactId="EBI-11991950">
        <id>Q8WWP7</id>
    </interactant>
    <interactant intactId="EBI-726691">
        <id>Q8WY91</id>
        <label>THAP4</label>
    </interactant>
    <organismsDiffer>false</organismsDiffer>
    <experiments>3</experiments>
</comment>
<comment type="interaction">
    <interactant intactId="EBI-11991950">
        <id>Q8WWP7</id>
    </interactant>
    <interactant intactId="EBI-6448756">
        <id>Q96DZ7</id>
        <label>TM4SF19</label>
    </interactant>
    <organismsDiffer>false</organismsDiffer>
    <experiments>3</experiments>
</comment>
<comment type="interaction">
    <interactant intactId="EBI-11991950">
        <id>Q8WWP7</id>
    </interactant>
    <interactant intactId="EBI-3922699">
        <id>Q96IK0</id>
        <label>TMEM101</label>
    </interactant>
    <organismsDiffer>false</organismsDiffer>
    <experiments>3</experiments>
</comment>
<comment type="interaction">
    <interactant intactId="EBI-11991950">
        <id>Q8WWP7</id>
    </interactant>
    <interactant intactId="EBI-8638294">
        <id>Q9NUH8</id>
        <label>TMEM14B</label>
    </interactant>
    <organismsDiffer>false</organismsDiffer>
    <experiments>3</experiments>
</comment>
<comment type="interaction">
    <interactant intactId="EBI-11991950">
        <id>Q8WWP7</id>
    </interactant>
    <interactant intactId="EBI-11722971">
        <id>Q53FP2</id>
        <label>TMEM35A</label>
    </interactant>
    <organismsDiffer>false</organismsDiffer>
    <experiments>3</experiments>
</comment>
<comment type="interaction">
    <interactant intactId="EBI-11991950">
        <id>Q8WWP7</id>
    </interactant>
    <interactant intactId="EBI-3923061">
        <id>Q96B21</id>
        <label>TMEM45B</label>
    </interactant>
    <organismsDiffer>false</organismsDiffer>
    <experiments>3</experiments>
</comment>
<comment type="interaction">
    <interactant intactId="EBI-11991950">
        <id>Q8WWP7</id>
    </interactant>
    <interactant intactId="EBI-8649725">
        <id>Q9BSE2</id>
        <label>TMEM79</label>
    </interactant>
    <organismsDiffer>false</organismsDiffer>
    <experiments>3</experiments>
</comment>
<comment type="interaction">
    <interactant intactId="EBI-11991950">
        <id>Q8WWP7</id>
    </interactant>
    <interactant intactId="EBI-1051115">
        <id>Q9H3N1</id>
        <label>TMX1</label>
    </interactant>
    <organismsDiffer>false</organismsDiffer>
    <experiments>3</experiments>
</comment>
<comment type="interaction">
    <interactant intactId="EBI-11991950">
        <id>Q8WWP7</id>
    </interactant>
    <interactant intactId="EBI-6447886">
        <id>Q9Y320</id>
        <label>TMX2</label>
    </interactant>
    <organismsDiffer>false</organismsDiffer>
    <experiments>3</experiments>
</comment>
<comment type="interaction">
    <interactant intactId="EBI-11991950">
        <id>Q8WWP7</id>
    </interactant>
    <interactant intactId="EBI-12837904">
        <id>Q96MV8</id>
        <label>ZDHHC15</label>
    </interactant>
    <organismsDiffer>false</organismsDiffer>
    <experiments>3</experiments>
</comment>
<comment type="interaction">
    <interactant intactId="EBI-11991950">
        <id>Q8WWP7</id>
    </interactant>
    <interactant intactId="EBI-3892947">
        <id>Q5T4F4</id>
        <label>ZFYVE27</label>
    </interactant>
    <organismsDiffer>false</organismsDiffer>
    <experiments>3</experiments>
</comment>
<comment type="subcellular location">
    <subcellularLocation>
        <location evidence="2">Endoplasmic reticulum membrane</location>
        <topology evidence="11">Single-pass type IV membrane protein</topology>
    </subcellularLocation>
    <subcellularLocation>
        <location evidence="2">Golgi apparatus membrane</location>
        <topology evidence="11">Single-pass type IV membrane protein</topology>
    </subcellularLocation>
</comment>
<comment type="tissue specificity">
    <text evidence="7 9">Predominantly expressed in the spleen and to a lesser extent in the lymph nodes. Detected in T-cells.</text>
</comment>
<comment type="similarity">
    <text evidence="11">Belongs to the TRAFAC class TrmE-Era-EngA-EngB-Septin-like GTPase superfamily. AIG1/Toc34/Toc159-like paraseptin GTPase family. IAN subfamily.</text>
</comment>
<proteinExistence type="evidence at protein level"/>
<dbReference type="EMBL" id="AJ306287">
    <property type="protein sequence ID" value="CAC83740.1"/>
    <property type="molecule type" value="mRNA"/>
</dbReference>
<dbReference type="EMBL" id="AK091818">
    <property type="protein sequence ID" value="BAC03754.1"/>
    <property type="molecule type" value="mRNA"/>
</dbReference>
<dbReference type="EMBL" id="AK315127">
    <property type="protein sequence ID" value="BAG37580.1"/>
    <property type="molecule type" value="mRNA"/>
</dbReference>
<dbReference type="EMBL" id="CH471173">
    <property type="protein sequence ID" value="EAW54095.1"/>
    <property type="molecule type" value="Genomic_DNA"/>
</dbReference>
<dbReference type="EMBL" id="BC040736">
    <property type="protein sequence ID" value="AAH40736.1"/>
    <property type="molecule type" value="mRNA"/>
</dbReference>
<dbReference type="CCDS" id="CCDS5906.1"/>
<dbReference type="RefSeq" id="NP_570115.1">
    <property type="nucleotide sequence ID" value="NM_130759.4"/>
</dbReference>
<dbReference type="PDB" id="3V70">
    <property type="method" value="X-ray"/>
    <property type="resolution" value="2.21 A"/>
    <property type="chains" value="A/B=25-253"/>
</dbReference>
<dbReference type="PDBsum" id="3V70"/>
<dbReference type="SMR" id="Q8WWP7"/>
<dbReference type="BioGRID" id="128063">
    <property type="interactions" value="54"/>
</dbReference>
<dbReference type="FunCoup" id="Q8WWP7">
    <property type="interactions" value="24"/>
</dbReference>
<dbReference type="IntAct" id="Q8WWP7">
    <property type="interactions" value="48"/>
</dbReference>
<dbReference type="STRING" id="9606.ENSP00000302833"/>
<dbReference type="iPTMnet" id="Q8WWP7"/>
<dbReference type="MetOSite" id="Q8WWP7"/>
<dbReference type="PhosphoSitePlus" id="Q8WWP7"/>
<dbReference type="BioMuta" id="GIMAP1"/>
<dbReference type="DMDM" id="38372377"/>
<dbReference type="MassIVE" id="Q8WWP7"/>
<dbReference type="PaxDb" id="9606-ENSP00000302833"/>
<dbReference type="PeptideAtlas" id="Q8WWP7"/>
<dbReference type="ProteomicsDB" id="74918"/>
<dbReference type="Antibodypedia" id="32894">
    <property type="antibodies" value="58 antibodies from 15 providers"/>
</dbReference>
<dbReference type="DNASU" id="170575"/>
<dbReference type="Ensembl" id="ENST00000307194.6">
    <property type="protein sequence ID" value="ENSP00000302833.5"/>
    <property type="gene ID" value="ENSG00000213203.3"/>
</dbReference>
<dbReference type="GeneID" id="170575"/>
<dbReference type="KEGG" id="hsa:170575"/>
<dbReference type="MANE-Select" id="ENST00000307194.6">
    <property type="protein sequence ID" value="ENSP00000302833.5"/>
    <property type="RefSeq nucleotide sequence ID" value="NM_130759.4"/>
    <property type="RefSeq protein sequence ID" value="NP_570115.1"/>
</dbReference>
<dbReference type="UCSC" id="uc003whq.4">
    <property type="organism name" value="human"/>
</dbReference>
<dbReference type="AGR" id="HGNC:23237"/>
<dbReference type="CTD" id="170575"/>
<dbReference type="GeneCards" id="GIMAP1"/>
<dbReference type="HGNC" id="HGNC:23237">
    <property type="gene designation" value="GIMAP1"/>
</dbReference>
<dbReference type="HPA" id="ENSG00000213203">
    <property type="expression patterns" value="Tissue enhanced (lymphoid)"/>
</dbReference>
<dbReference type="MIM" id="608084">
    <property type="type" value="gene"/>
</dbReference>
<dbReference type="neXtProt" id="NX_Q8WWP7"/>
<dbReference type="OpenTargets" id="ENSG00000213203"/>
<dbReference type="PharmGKB" id="PA134978698"/>
<dbReference type="VEuPathDB" id="HostDB:ENSG00000213203"/>
<dbReference type="eggNOG" id="ENOG502SN36">
    <property type="taxonomic scope" value="Eukaryota"/>
</dbReference>
<dbReference type="GeneTree" id="ENSGT00940000161272"/>
<dbReference type="HOGENOM" id="CLU_010468_1_2_1"/>
<dbReference type="InParanoid" id="Q8WWP7"/>
<dbReference type="OMA" id="HKGAHYS"/>
<dbReference type="OrthoDB" id="8954335at2759"/>
<dbReference type="PAN-GO" id="Q8WWP7">
    <property type="GO annotations" value="1 GO annotation based on evolutionary models"/>
</dbReference>
<dbReference type="PhylomeDB" id="Q8WWP7"/>
<dbReference type="TreeFam" id="TF330845"/>
<dbReference type="PathwayCommons" id="Q8WWP7"/>
<dbReference type="SignaLink" id="Q8WWP7"/>
<dbReference type="BioGRID-ORCS" id="170575">
    <property type="hits" value="9 hits in 1142 CRISPR screens"/>
</dbReference>
<dbReference type="EvolutionaryTrace" id="Q8WWP7"/>
<dbReference type="GenomeRNAi" id="170575"/>
<dbReference type="Pharos" id="Q8WWP7">
    <property type="development level" value="Tbio"/>
</dbReference>
<dbReference type="PRO" id="PR:Q8WWP7"/>
<dbReference type="Proteomes" id="UP000005640">
    <property type="component" value="Chromosome 7"/>
</dbReference>
<dbReference type="RNAct" id="Q8WWP7">
    <property type="molecule type" value="protein"/>
</dbReference>
<dbReference type="Bgee" id="ENSG00000213203">
    <property type="expression patterns" value="Expressed in granulocyte and 175 other cell types or tissues"/>
</dbReference>
<dbReference type="ExpressionAtlas" id="Q8WWP7">
    <property type="expression patterns" value="baseline and differential"/>
</dbReference>
<dbReference type="GO" id="GO:0005783">
    <property type="term" value="C:endoplasmic reticulum"/>
    <property type="evidence" value="ECO:0000314"/>
    <property type="project" value="HPA"/>
</dbReference>
<dbReference type="GO" id="GO:0005789">
    <property type="term" value="C:endoplasmic reticulum membrane"/>
    <property type="evidence" value="ECO:0007669"/>
    <property type="project" value="UniProtKB-SubCell"/>
</dbReference>
<dbReference type="GO" id="GO:0000139">
    <property type="term" value="C:Golgi membrane"/>
    <property type="evidence" value="ECO:0007669"/>
    <property type="project" value="UniProtKB-SubCell"/>
</dbReference>
<dbReference type="GO" id="GO:0005525">
    <property type="term" value="F:GTP binding"/>
    <property type="evidence" value="ECO:0007669"/>
    <property type="project" value="UniProtKB-KW"/>
</dbReference>
<dbReference type="CDD" id="cd01852">
    <property type="entry name" value="AIG1"/>
    <property type="match status" value="1"/>
</dbReference>
<dbReference type="FunFam" id="3.40.50.300:FF:000366">
    <property type="entry name" value="GTPase, IMAP family member 2"/>
    <property type="match status" value="1"/>
</dbReference>
<dbReference type="Gene3D" id="3.40.50.300">
    <property type="entry name" value="P-loop containing nucleotide triphosphate hydrolases"/>
    <property type="match status" value="1"/>
</dbReference>
<dbReference type="InterPro" id="IPR006703">
    <property type="entry name" value="G_AIG1"/>
</dbReference>
<dbReference type="InterPro" id="IPR045058">
    <property type="entry name" value="GIMA/IAN/Toc"/>
</dbReference>
<dbReference type="InterPro" id="IPR027417">
    <property type="entry name" value="P-loop_NTPase"/>
</dbReference>
<dbReference type="PANTHER" id="PTHR10903:SF74">
    <property type="entry name" value="GTPASE IMAP FAMILY MEMBER 1"/>
    <property type="match status" value="1"/>
</dbReference>
<dbReference type="PANTHER" id="PTHR10903">
    <property type="entry name" value="GTPASE, IMAP FAMILY MEMBER-RELATED"/>
    <property type="match status" value="1"/>
</dbReference>
<dbReference type="Pfam" id="PF04548">
    <property type="entry name" value="AIG1"/>
    <property type="match status" value="1"/>
</dbReference>
<dbReference type="SUPFAM" id="SSF52540">
    <property type="entry name" value="P-loop containing nucleoside triphosphate hydrolases"/>
    <property type="match status" value="1"/>
</dbReference>
<dbReference type="PROSITE" id="PS51720">
    <property type="entry name" value="G_AIG1"/>
    <property type="match status" value="1"/>
</dbReference>